<evidence type="ECO:0000255" key="1">
    <source>
        <dbReference type="HAMAP-Rule" id="MF_01708"/>
    </source>
</evidence>
<evidence type="ECO:0000305" key="2"/>
<feature type="chain" id="PRO_0000092460" description="Lipoprotein-releasing system ATP-binding protein LolD">
    <location>
        <begin position="1"/>
        <end position="230"/>
    </location>
</feature>
<feature type="domain" description="ABC transporter" evidence="1">
    <location>
        <begin position="6"/>
        <end position="230"/>
    </location>
</feature>
<feature type="binding site" evidence="1">
    <location>
        <begin position="42"/>
        <end position="49"/>
    </location>
    <ligand>
        <name>ATP</name>
        <dbReference type="ChEBI" id="CHEBI:30616"/>
    </ligand>
</feature>
<proteinExistence type="inferred from homology"/>
<keyword id="KW-0067">ATP-binding</keyword>
<keyword id="KW-0997">Cell inner membrane</keyword>
<keyword id="KW-1003">Cell membrane</keyword>
<keyword id="KW-0472">Membrane</keyword>
<keyword id="KW-0547">Nucleotide-binding</keyword>
<keyword id="KW-1185">Reference proteome</keyword>
<keyword id="KW-1278">Translocase</keyword>
<keyword id="KW-0813">Transport</keyword>
<protein>
    <recommendedName>
        <fullName evidence="1">Lipoprotein-releasing system ATP-binding protein LolD</fullName>
        <ecNumber evidence="1">7.6.2.-</ecNumber>
    </recommendedName>
</protein>
<gene>
    <name evidence="1" type="primary">lolD</name>
    <name type="ordered locus">SO_2258</name>
</gene>
<organism>
    <name type="scientific">Shewanella oneidensis (strain ATCC 700550 / JCM 31522 / CIP 106686 / LMG 19005 / NCIMB 14063 / MR-1)</name>
    <dbReference type="NCBI Taxonomy" id="211586"/>
    <lineage>
        <taxon>Bacteria</taxon>
        <taxon>Pseudomonadati</taxon>
        <taxon>Pseudomonadota</taxon>
        <taxon>Gammaproteobacteria</taxon>
        <taxon>Alteromonadales</taxon>
        <taxon>Shewanellaceae</taxon>
        <taxon>Shewanella</taxon>
    </lineage>
</organism>
<sequence>MQDVLLQVQAVSKSYHDGDVTTQVLSDVDLQVFKGEQLAIVGTSGSGKSTLLHIMGTLDKPSSGKVLLAGEDLYQVSSARQAQIRNQDLGFIYQFHHLLPEFTALENVAMPAFIQGRDRTLAQADAKVLLERVGLGHRMSHIPAELSGGERQRVAIARALINKPKLVLADEPTGNLDAKSGEAVYELIRELANQLGTAFVVVTHDPKLAARMDRQLTMKNGYLQVPESAQ</sequence>
<comment type="function">
    <text evidence="1">Part of the ABC transporter complex LolCDE involved in the translocation of mature outer membrane-directed lipoproteins, from the inner membrane to the periplasmic chaperone, LolA. Responsible for the formation of the LolA-lipoprotein complex in an ATP-dependent manner.</text>
</comment>
<comment type="subunit">
    <text evidence="1">The complex is composed of two ATP-binding proteins (LolD) and two transmembrane proteins (LolC and LolE).</text>
</comment>
<comment type="subcellular location">
    <subcellularLocation>
        <location evidence="1">Cell inner membrane</location>
        <topology evidence="1">Peripheral membrane protein</topology>
    </subcellularLocation>
</comment>
<comment type="similarity">
    <text evidence="1">Belongs to the ABC transporter superfamily. Lipoprotein translocase (TC 3.A.1.125) family.</text>
</comment>
<comment type="sequence caution" evidence="2">
    <conflict type="erroneous initiation">
        <sequence resource="EMBL-CDS" id="AAN55298"/>
    </conflict>
    <text>Extended N-terminus.</text>
</comment>
<accession>Q8EEV5</accession>
<reference key="1">
    <citation type="journal article" date="2002" name="Nat. Biotechnol.">
        <title>Genome sequence of the dissimilatory metal ion-reducing bacterium Shewanella oneidensis.</title>
        <authorList>
            <person name="Heidelberg J.F."/>
            <person name="Paulsen I.T."/>
            <person name="Nelson K.E."/>
            <person name="Gaidos E.J."/>
            <person name="Nelson W.C."/>
            <person name="Read T.D."/>
            <person name="Eisen J.A."/>
            <person name="Seshadri R."/>
            <person name="Ward N.L."/>
            <person name="Methe B.A."/>
            <person name="Clayton R.A."/>
            <person name="Meyer T."/>
            <person name="Tsapin A."/>
            <person name="Scott J."/>
            <person name="Beanan M.J."/>
            <person name="Brinkac L.M."/>
            <person name="Daugherty S.C."/>
            <person name="DeBoy R.T."/>
            <person name="Dodson R.J."/>
            <person name="Durkin A.S."/>
            <person name="Haft D.H."/>
            <person name="Kolonay J.F."/>
            <person name="Madupu R."/>
            <person name="Peterson J.D."/>
            <person name="Umayam L.A."/>
            <person name="White O."/>
            <person name="Wolf A.M."/>
            <person name="Vamathevan J.J."/>
            <person name="Weidman J.F."/>
            <person name="Impraim M."/>
            <person name="Lee K."/>
            <person name="Berry K.J."/>
            <person name="Lee C."/>
            <person name="Mueller J."/>
            <person name="Khouri H.M."/>
            <person name="Gill J."/>
            <person name="Utterback T.R."/>
            <person name="McDonald L.A."/>
            <person name="Feldblyum T.V."/>
            <person name="Smith H.O."/>
            <person name="Venter J.C."/>
            <person name="Nealson K.H."/>
            <person name="Fraser C.M."/>
        </authorList>
    </citation>
    <scope>NUCLEOTIDE SEQUENCE [LARGE SCALE GENOMIC DNA]</scope>
    <source>
        <strain>ATCC 700550 / JCM 31522 / CIP 106686 / LMG 19005 / NCIMB 14063 / MR-1</strain>
    </source>
</reference>
<name>LOLD_SHEON</name>
<dbReference type="EC" id="7.6.2.-" evidence="1"/>
<dbReference type="EMBL" id="AE014299">
    <property type="protein sequence ID" value="AAN55298.2"/>
    <property type="status" value="ALT_INIT"/>
    <property type="molecule type" value="Genomic_DNA"/>
</dbReference>
<dbReference type="RefSeq" id="NP_717854.2">
    <property type="nucleotide sequence ID" value="NC_004347.2"/>
</dbReference>
<dbReference type="RefSeq" id="WP_164925702.1">
    <property type="nucleotide sequence ID" value="NC_004347.2"/>
</dbReference>
<dbReference type="SMR" id="Q8EEV5"/>
<dbReference type="STRING" id="211586.SO_2258"/>
<dbReference type="PaxDb" id="211586-SO_2258"/>
<dbReference type="KEGG" id="son:SO_2258"/>
<dbReference type="PATRIC" id="fig|211586.12.peg.2173"/>
<dbReference type="eggNOG" id="COG1136">
    <property type="taxonomic scope" value="Bacteria"/>
</dbReference>
<dbReference type="HOGENOM" id="CLU_000604_1_22_6"/>
<dbReference type="OrthoDB" id="9801477at2"/>
<dbReference type="PhylomeDB" id="Q8EEV5"/>
<dbReference type="Proteomes" id="UP000008186">
    <property type="component" value="Chromosome"/>
</dbReference>
<dbReference type="GO" id="GO:0005886">
    <property type="term" value="C:plasma membrane"/>
    <property type="evidence" value="ECO:0000318"/>
    <property type="project" value="GO_Central"/>
</dbReference>
<dbReference type="GO" id="GO:0005524">
    <property type="term" value="F:ATP binding"/>
    <property type="evidence" value="ECO:0007669"/>
    <property type="project" value="UniProtKB-KW"/>
</dbReference>
<dbReference type="GO" id="GO:0016887">
    <property type="term" value="F:ATP hydrolysis activity"/>
    <property type="evidence" value="ECO:0007669"/>
    <property type="project" value="InterPro"/>
</dbReference>
<dbReference type="GO" id="GO:0022857">
    <property type="term" value="F:transmembrane transporter activity"/>
    <property type="evidence" value="ECO:0000318"/>
    <property type="project" value="GO_Central"/>
</dbReference>
<dbReference type="GO" id="GO:0044874">
    <property type="term" value="P:lipoprotein localization to outer membrane"/>
    <property type="evidence" value="ECO:0000318"/>
    <property type="project" value="GO_Central"/>
</dbReference>
<dbReference type="GO" id="GO:0089705">
    <property type="term" value="P:protein localization to outer membrane"/>
    <property type="evidence" value="ECO:0000318"/>
    <property type="project" value="GO_Central"/>
</dbReference>
<dbReference type="GO" id="GO:0055085">
    <property type="term" value="P:transmembrane transport"/>
    <property type="evidence" value="ECO:0000318"/>
    <property type="project" value="GO_Central"/>
</dbReference>
<dbReference type="CDD" id="cd03255">
    <property type="entry name" value="ABC_MJ0796_LolCDE_FtsE"/>
    <property type="match status" value="1"/>
</dbReference>
<dbReference type="FunFam" id="3.40.50.300:FF:000230">
    <property type="entry name" value="Lipoprotein-releasing system ATP-binding protein LolD"/>
    <property type="match status" value="1"/>
</dbReference>
<dbReference type="Gene3D" id="3.40.50.300">
    <property type="entry name" value="P-loop containing nucleotide triphosphate hydrolases"/>
    <property type="match status" value="1"/>
</dbReference>
<dbReference type="InterPro" id="IPR003593">
    <property type="entry name" value="AAA+_ATPase"/>
</dbReference>
<dbReference type="InterPro" id="IPR003439">
    <property type="entry name" value="ABC_transporter-like_ATP-bd"/>
</dbReference>
<dbReference type="InterPro" id="IPR017871">
    <property type="entry name" value="ABC_transporter-like_CS"/>
</dbReference>
<dbReference type="InterPro" id="IPR015854">
    <property type="entry name" value="ABC_transpr_LolD-like"/>
</dbReference>
<dbReference type="InterPro" id="IPR011924">
    <property type="entry name" value="LolD_lipo_ATP-bd"/>
</dbReference>
<dbReference type="InterPro" id="IPR017911">
    <property type="entry name" value="MacB-like_ATP-bd"/>
</dbReference>
<dbReference type="InterPro" id="IPR027417">
    <property type="entry name" value="P-loop_NTPase"/>
</dbReference>
<dbReference type="NCBIfam" id="TIGR02211">
    <property type="entry name" value="LolD_lipo_ex"/>
    <property type="match status" value="1"/>
</dbReference>
<dbReference type="PANTHER" id="PTHR24220">
    <property type="entry name" value="IMPORT ATP-BINDING PROTEIN"/>
    <property type="match status" value="1"/>
</dbReference>
<dbReference type="PANTHER" id="PTHR24220:SF689">
    <property type="entry name" value="LIPOPROTEIN-RELEASING SYSTEM ATP-BINDING PROTEIN LOLD"/>
    <property type="match status" value="1"/>
</dbReference>
<dbReference type="Pfam" id="PF00005">
    <property type="entry name" value="ABC_tran"/>
    <property type="match status" value="1"/>
</dbReference>
<dbReference type="SMART" id="SM00382">
    <property type="entry name" value="AAA"/>
    <property type="match status" value="1"/>
</dbReference>
<dbReference type="SUPFAM" id="SSF52540">
    <property type="entry name" value="P-loop containing nucleoside triphosphate hydrolases"/>
    <property type="match status" value="1"/>
</dbReference>
<dbReference type="PROSITE" id="PS00211">
    <property type="entry name" value="ABC_TRANSPORTER_1"/>
    <property type="match status" value="1"/>
</dbReference>
<dbReference type="PROSITE" id="PS50893">
    <property type="entry name" value="ABC_TRANSPORTER_2"/>
    <property type="match status" value="1"/>
</dbReference>
<dbReference type="PROSITE" id="PS51244">
    <property type="entry name" value="LOLD"/>
    <property type="match status" value="1"/>
</dbReference>